<sequence>MINNQTLARPYAKAAFEYASAANGSDAWSGMLGLAAAVVEAPEVAELLRNPRLTRESKVEAVLRLFADDVDEAFRNFIANLGEHDRLFVLPTVREQFEAYKAEAEKTIDVELETAYELSAEQLETLAAALSKRLDRSVNPRQVVNPALIGGLVIRAGDLVVDGSVRGKLSQLAESLKS</sequence>
<protein>
    <recommendedName>
        <fullName evidence="1">ATP synthase subunit delta</fullName>
    </recommendedName>
    <alternativeName>
        <fullName evidence="1">ATP synthase F(1) sector subunit delta</fullName>
    </alternativeName>
    <alternativeName>
        <fullName evidence="1">F-type ATPase subunit delta</fullName>
        <shortName evidence="1">F-ATPase subunit delta</shortName>
    </alternativeName>
</protein>
<accession>C1DND6</accession>
<feature type="chain" id="PRO_1000215228" description="ATP synthase subunit delta">
    <location>
        <begin position="1"/>
        <end position="178"/>
    </location>
</feature>
<proteinExistence type="inferred from homology"/>
<organism>
    <name type="scientific">Azotobacter vinelandii (strain DJ / ATCC BAA-1303)</name>
    <dbReference type="NCBI Taxonomy" id="322710"/>
    <lineage>
        <taxon>Bacteria</taxon>
        <taxon>Pseudomonadati</taxon>
        <taxon>Pseudomonadota</taxon>
        <taxon>Gammaproteobacteria</taxon>
        <taxon>Pseudomonadales</taxon>
        <taxon>Pseudomonadaceae</taxon>
        <taxon>Azotobacter</taxon>
    </lineage>
</organism>
<keyword id="KW-0066">ATP synthesis</keyword>
<keyword id="KW-0997">Cell inner membrane</keyword>
<keyword id="KW-1003">Cell membrane</keyword>
<keyword id="KW-0139">CF(1)</keyword>
<keyword id="KW-0375">Hydrogen ion transport</keyword>
<keyword id="KW-0406">Ion transport</keyword>
<keyword id="KW-0472">Membrane</keyword>
<keyword id="KW-0813">Transport</keyword>
<comment type="function">
    <text evidence="1">F(1)F(0) ATP synthase produces ATP from ADP in the presence of a proton or sodium gradient. F-type ATPases consist of two structural domains, F(1) containing the extramembraneous catalytic core and F(0) containing the membrane proton channel, linked together by a central stalk and a peripheral stalk. During catalysis, ATP synthesis in the catalytic domain of F(1) is coupled via a rotary mechanism of the central stalk subunits to proton translocation.</text>
</comment>
<comment type="function">
    <text evidence="1">This protein is part of the stalk that links CF(0) to CF(1). It either transmits conformational changes from CF(0) to CF(1) or is implicated in proton conduction.</text>
</comment>
<comment type="subunit">
    <text evidence="1">F-type ATPases have 2 components, F(1) - the catalytic core - and F(0) - the membrane proton channel. F(1) has five subunits: alpha(3), beta(3), gamma(1), delta(1), epsilon(1). F(0) has three main subunits: a(1), b(2) and c(10-14). The alpha and beta chains form an alternating ring which encloses part of the gamma chain. F(1) is attached to F(0) by a central stalk formed by the gamma and epsilon chains, while a peripheral stalk is formed by the delta and b chains.</text>
</comment>
<comment type="subcellular location">
    <subcellularLocation>
        <location evidence="1">Cell inner membrane</location>
        <topology evidence="1">Peripheral membrane protein</topology>
    </subcellularLocation>
</comment>
<comment type="similarity">
    <text evidence="1">Belongs to the ATPase delta chain family.</text>
</comment>
<dbReference type="EMBL" id="CP001157">
    <property type="protein sequence ID" value="ACO81294.1"/>
    <property type="molecule type" value="Genomic_DNA"/>
</dbReference>
<dbReference type="RefSeq" id="WP_012703647.1">
    <property type="nucleotide sequence ID" value="NC_012560.1"/>
</dbReference>
<dbReference type="SMR" id="C1DND6"/>
<dbReference type="STRING" id="322710.Avin_52190"/>
<dbReference type="EnsemblBacteria" id="ACO81294">
    <property type="protein sequence ID" value="ACO81294"/>
    <property type="gene ID" value="Avin_52190"/>
</dbReference>
<dbReference type="GeneID" id="88188032"/>
<dbReference type="KEGG" id="avn:Avin_52190"/>
<dbReference type="eggNOG" id="COG0712">
    <property type="taxonomic scope" value="Bacteria"/>
</dbReference>
<dbReference type="HOGENOM" id="CLU_085114_3_0_6"/>
<dbReference type="OrthoDB" id="9816221at2"/>
<dbReference type="Proteomes" id="UP000002424">
    <property type="component" value="Chromosome"/>
</dbReference>
<dbReference type="GO" id="GO:0005886">
    <property type="term" value="C:plasma membrane"/>
    <property type="evidence" value="ECO:0007669"/>
    <property type="project" value="UniProtKB-SubCell"/>
</dbReference>
<dbReference type="GO" id="GO:0045259">
    <property type="term" value="C:proton-transporting ATP synthase complex"/>
    <property type="evidence" value="ECO:0007669"/>
    <property type="project" value="UniProtKB-KW"/>
</dbReference>
<dbReference type="GO" id="GO:0046933">
    <property type="term" value="F:proton-transporting ATP synthase activity, rotational mechanism"/>
    <property type="evidence" value="ECO:0007669"/>
    <property type="project" value="UniProtKB-UniRule"/>
</dbReference>
<dbReference type="Gene3D" id="1.10.520.20">
    <property type="entry name" value="N-terminal domain of the delta subunit of the F1F0-ATP synthase"/>
    <property type="match status" value="1"/>
</dbReference>
<dbReference type="HAMAP" id="MF_01416">
    <property type="entry name" value="ATP_synth_delta_bact"/>
    <property type="match status" value="1"/>
</dbReference>
<dbReference type="InterPro" id="IPR026015">
    <property type="entry name" value="ATP_synth_OSCP/delta_N_sf"/>
</dbReference>
<dbReference type="InterPro" id="IPR000711">
    <property type="entry name" value="ATPase_OSCP/dsu"/>
</dbReference>
<dbReference type="NCBIfam" id="TIGR01145">
    <property type="entry name" value="ATP_synt_delta"/>
    <property type="match status" value="1"/>
</dbReference>
<dbReference type="NCBIfam" id="NF004402">
    <property type="entry name" value="PRK05758.2-2"/>
    <property type="match status" value="1"/>
</dbReference>
<dbReference type="PANTHER" id="PTHR11910">
    <property type="entry name" value="ATP SYNTHASE DELTA CHAIN"/>
    <property type="match status" value="1"/>
</dbReference>
<dbReference type="Pfam" id="PF00213">
    <property type="entry name" value="OSCP"/>
    <property type="match status" value="1"/>
</dbReference>
<dbReference type="PRINTS" id="PR00125">
    <property type="entry name" value="ATPASEDELTA"/>
</dbReference>
<dbReference type="SUPFAM" id="SSF47928">
    <property type="entry name" value="N-terminal domain of the delta subunit of the F1F0-ATP synthase"/>
    <property type="match status" value="1"/>
</dbReference>
<gene>
    <name evidence="1" type="primary">atpH</name>
    <name type="ordered locus">Avin_52190</name>
</gene>
<reference key="1">
    <citation type="journal article" date="2009" name="J. Bacteriol.">
        <title>Genome sequence of Azotobacter vinelandii, an obligate aerobe specialized to support diverse anaerobic metabolic processes.</title>
        <authorList>
            <person name="Setubal J.C."/>
            <person name="Dos Santos P."/>
            <person name="Goldman B.S."/>
            <person name="Ertesvaag H."/>
            <person name="Espin G."/>
            <person name="Rubio L.M."/>
            <person name="Valla S."/>
            <person name="Almeida N.F."/>
            <person name="Balasubramanian D."/>
            <person name="Cromes L."/>
            <person name="Curatti L."/>
            <person name="Du Z."/>
            <person name="Godsy E."/>
            <person name="Goodner B."/>
            <person name="Hellner-Burris K."/>
            <person name="Hernandez J.A."/>
            <person name="Houmiel K."/>
            <person name="Imperial J."/>
            <person name="Kennedy C."/>
            <person name="Larson T.J."/>
            <person name="Latreille P."/>
            <person name="Ligon L.S."/>
            <person name="Lu J."/>
            <person name="Maerk M."/>
            <person name="Miller N.M."/>
            <person name="Norton S."/>
            <person name="O'Carroll I.P."/>
            <person name="Paulsen I."/>
            <person name="Raulfs E.C."/>
            <person name="Roemer R."/>
            <person name="Rosser J."/>
            <person name="Segura D."/>
            <person name="Slater S."/>
            <person name="Stricklin S.L."/>
            <person name="Studholme D.J."/>
            <person name="Sun J."/>
            <person name="Viana C.J."/>
            <person name="Wallin E."/>
            <person name="Wang B."/>
            <person name="Wheeler C."/>
            <person name="Zhu H."/>
            <person name="Dean D.R."/>
            <person name="Dixon R."/>
            <person name="Wood D."/>
        </authorList>
    </citation>
    <scope>NUCLEOTIDE SEQUENCE [LARGE SCALE GENOMIC DNA]</scope>
    <source>
        <strain>DJ / ATCC BAA-1303</strain>
    </source>
</reference>
<name>ATPD_AZOVD</name>
<evidence type="ECO:0000255" key="1">
    <source>
        <dbReference type="HAMAP-Rule" id="MF_01416"/>
    </source>
</evidence>